<protein>
    <recommendedName>
        <fullName evidence="1">Enolase</fullName>
        <ecNumber evidence="1">4.2.1.11</ecNumber>
    </recommendedName>
    <alternativeName>
        <fullName evidence="1">2-phospho-D-glycerate hydro-lyase</fullName>
    </alternativeName>
    <alternativeName>
        <fullName evidence="1">2-phosphoglycerate dehydratase</fullName>
    </alternativeName>
</protein>
<dbReference type="EC" id="4.2.1.11" evidence="1"/>
<dbReference type="EMBL" id="CP001025">
    <property type="protein sequence ID" value="ACB64498.1"/>
    <property type="molecule type" value="Genomic_DNA"/>
</dbReference>
<dbReference type="RefSeq" id="WP_006751590.1">
    <property type="nucleotide sequence ID" value="NC_010551.1"/>
</dbReference>
<dbReference type="SMR" id="B1YT09"/>
<dbReference type="GeneID" id="93085652"/>
<dbReference type="KEGG" id="bac:BamMC406_2017"/>
<dbReference type="HOGENOM" id="CLU_031223_2_1_4"/>
<dbReference type="OrthoDB" id="9804716at2"/>
<dbReference type="UniPathway" id="UPA00109">
    <property type="reaction ID" value="UER00187"/>
</dbReference>
<dbReference type="Proteomes" id="UP000001680">
    <property type="component" value="Chromosome 1"/>
</dbReference>
<dbReference type="GO" id="GO:0009986">
    <property type="term" value="C:cell surface"/>
    <property type="evidence" value="ECO:0007669"/>
    <property type="project" value="UniProtKB-SubCell"/>
</dbReference>
<dbReference type="GO" id="GO:0005576">
    <property type="term" value="C:extracellular region"/>
    <property type="evidence" value="ECO:0007669"/>
    <property type="project" value="UniProtKB-SubCell"/>
</dbReference>
<dbReference type="GO" id="GO:0000015">
    <property type="term" value="C:phosphopyruvate hydratase complex"/>
    <property type="evidence" value="ECO:0007669"/>
    <property type="project" value="InterPro"/>
</dbReference>
<dbReference type="GO" id="GO:0000287">
    <property type="term" value="F:magnesium ion binding"/>
    <property type="evidence" value="ECO:0007669"/>
    <property type="project" value="UniProtKB-UniRule"/>
</dbReference>
<dbReference type="GO" id="GO:0004634">
    <property type="term" value="F:phosphopyruvate hydratase activity"/>
    <property type="evidence" value="ECO:0007669"/>
    <property type="project" value="UniProtKB-UniRule"/>
</dbReference>
<dbReference type="GO" id="GO:0006096">
    <property type="term" value="P:glycolytic process"/>
    <property type="evidence" value="ECO:0007669"/>
    <property type="project" value="UniProtKB-UniRule"/>
</dbReference>
<dbReference type="CDD" id="cd03313">
    <property type="entry name" value="enolase"/>
    <property type="match status" value="1"/>
</dbReference>
<dbReference type="FunFam" id="3.20.20.120:FF:000001">
    <property type="entry name" value="Enolase"/>
    <property type="match status" value="1"/>
</dbReference>
<dbReference type="FunFam" id="3.30.390.10:FF:000001">
    <property type="entry name" value="Enolase"/>
    <property type="match status" value="1"/>
</dbReference>
<dbReference type="Gene3D" id="3.20.20.120">
    <property type="entry name" value="Enolase-like C-terminal domain"/>
    <property type="match status" value="1"/>
</dbReference>
<dbReference type="Gene3D" id="3.30.390.10">
    <property type="entry name" value="Enolase-like, N-terminal domain"/>
    <property type="match status" value="1"/>
</dbReference>
<dbReference type="HAMAP" id="MF_00318">
    <property type="entry name" value="Enolase"/>
    <property type="match status" value="1"/>
</dbReference>
<dbReference type="InterPro" id="IPR000941">
    <property type="entry name" value="Enolase"/>
</dbReference>
<dbReference type="InterPro" id="IPR036849">
    <property type="entry name" value="Enolase-like_C_sf"/>
</dbReference>
<dbReference type="InterPro" id="IPR029017">
    <property type="entry name" value="Enolase-like_N"/>
</dbReference>
<dbReference type="InterPro" id="IPR020810">
    <property type="entry name" value="Enolase_C"/>
</dbReference>
<dbReference type="InterPro" id="IPR020809">
    <property type="entry name" value="Enolase_CS"/>
</dbReference>
<dbReference type="InterPro" id="IPR020811">
    <property type="entry name" value="Enolase_N"/>
</dbReference>
<dbReference type="NCBIfam" id="TIGR01060">
    <property type="entry name" value="eno"/>
    <property type="match status" value="1"/>
</dbReference>
<dbReference type="PANTHER" id="PTHR11902">
    <property type="entry name" value="ENOLASE"/>
    <property type="match status" value="1"/>
</dbReference>
<dbReference type="PANTHER" id="PTHR11902:SF1">
    <property type="entry name" value="ENOLASE"/>
    <property type="match status" value="1"/>
</dbReference>
<dbReference type="Pfam" id="PF00113">
    <property type="entry name" value="Enolase_C"/>
    <property type="match status" value="1"/>
</dbReference>
<dbReference type="Pfam" id="PF03952">
    <property type="entry name" value="Enolase_N"/>
    <property type="match status" value="1"/>
</dbReference>
<dbReference type="PIRSF" id="PIRSF001400">
    <property type="entry name" value="Enolase"/>
    <property type="match status" value="1"/>
</dbReference>
<dbReference type="PRINTS" id="PR00148">
    <property type="entry name" value="ENOLASE"/>
</dbReference>
<dbReference type="SFLD" id="SFLDS00001">
    <property type="entry name" value="Enolase"/>
    <property type="match status" value="1"/>
</dbReference>
<dbReference type="SFLD" id="SFLDF00002">
    <property type="entry name" value="enolase"/>
    <property type="match status" value="1"/>
</dbReference>
<dbReference type="SMART" id="SM01192">
    <property type="entry name" value="Enolase_C"/>
    <property type="match status" value="1"/>
</dbReference>
<dbReference type="SMART" id="SM01193">
    <property type="entry name" value="Enolase_N"/>
    <property type="match status" value="1"/>
</dbReference>
<dbReference type="SUPFAM" id="SSF51604">
    <property type="entry name" value="Enolase C-terminal domain-like"/>
    <property type="match status" value="1"/>
</dbReference>
<dbReference type="SUPFAM" id="SSF54826">
    <property type="entry name" value="Enolase N-terminal domain-like"/>
    <property type="match status" value="1"/>
</dbReference>
<dbReference type="PROSITE" id="PS00164">
    <property type="entry name" value="ENOLASE"/>
    <property type="match status" value="1"/>
</dbReference>
<reference key="1">
    <citation type="submission" date="2008-04" db="EMBL/GenBank/DDBJ databases">
        <title>Complete sequence of chromosome 1 of Burkholderia ambifaria MC40-6.</title>
        <authorList>
            <person name="Copeland A."/>
            <person name="Lucas S."/>
            <person name="Lapidus A."/>
            <person name="Glavina del Rio T."/>
            <person name="Dalin E."/>
            <person name="Tice H."/>
            <person name="Pitluck S."/>
            <person name="Chain P."/>
            <person name="Malfatti S."/>
            <person name="Shin M."/>
            <person name="Vergez L."/>
            <person name="Lang D."/>
            <person name="Schmutz J."/>
            <person name="Larimer F."/>
            <person name="Land M."/>
            <person name="Hauser L."/>
            <person name="Kyrpides N."/>
            <person name="Lykidis A."/>
            <person name="Ramette A."/>
            <person name="Konstantinidis K."/>
            <person name="Tiedje J."/>
            <person name="Richardson P."/>
        </authorList>
    </citation>
    <scope>NUCLEOTIDE SEQUENCE [LARGE SCALE GENOMIC DNA]</scope>
    <source>
        <strain>MC40-6</strain>
    </source>
</reference>
<sequence length="427" mass="45715">MSAIVDIIGREILDSRGNPTVECDVLLESGTMGRAAVPSGASTGSREAIELRDGEAGRYNGKGVLKAVEHINTEISEAIMGLDASEQAFLDKTLLELDGTDNKSRLGANAMLAVSMAVAKAAAEEAGLPLYRYFGGSGAMQLPVPMMNIVNGGAHANNSLDIQEFMIVPVSQPTFREALRCGAEVFHALKKILSDRGMSTAVGDEGGFAPNFGSNDECLSTILQAIEKAGYRAGEDVLLALDCAASEFYHDGKYQLAGEGLQLSSAEFTDYLATLADKFPIVSIEDGMHESDWEGWKLLTERLGKKVQLVGDDLFVTNTRILKEGIEKGIANSILIKINQIGTLTETFAAIEMAKRAGYTAVISHRSGETEDSTIADIAVGLNAGQIKTGSLSRSDRISKYNQLLRIEEDLGDIASYPGKSAFYNLR</sequence>
<feature type="chain" id="PRO_1000115836" description="Enolase">
    <location>
        <begin position="1"/>
        <end position="427"/>
    </location>
</feature>
<feature type="active site" description="Proton donor" evidence="1">
    <location>
        <position position="205"/>
    </location>
</feature>
<feature type="active site" description="Proton acceptor" evidence="1">
    <location>
        <position position="337"/>
    </location>
</feature>
<feature type="binding site" evidence="1">
    <location>
        <position position="163"/>
    </location>
    <ligand>
        <name>(2R)-2-phosphoglycerate</name>
        <dbReference type="ChEBI" id="CHEBI:58289"/>
    </ligand>
</feature>
<feature type="binding site" evidence="1">
    <location>
        <position position="242"/>
    </location>
    <ligand>
        <name>Mg(2+)</name>
        <dbReference type="ChEBI" id="CHEBI:18420"/>
    </ligand>
</feature>
<feature type="binding site" evidence="1">
    <location>
        <position position="285"/>
    </location>
    <ligand>
        <name>Mg(2+)</name>
        <dbReference type="ChEBI" id="CHEBI:18420"/>
    </ligand>
</feature>
<feature type="binding site" evidence="1">
    <location>
        <position position="312"/>
    </location>
    <ligand>
        <name>Mg(2+)</name>
        <dbReference type="ChEBI" id="CHEBI:18420"/>
    </ligand>
</feature>
<feature type="binding site" evidence="1">
    <location>
        <position position="337"/>
    </location>
    <ligand>
        <name>(2R)-2-phosphoglycerate</name>
        <dbReference type="ChEBI" id="CHEBI:58289"/>
    </ligand>
</feature>
<feature type="binding site" evidence="1">
    <location>
        <position position="366"/>
    </location>
    <ligand>
        <name>(2R)-2-phosphoglycerate</name>
        <dbReference type="ChEBI" id="CHEBI:58289"/>
    </ligand>
</feature>
<feature type="binding site" evidence="1">
    <location>
        <position position="367"/>
    </location>
    <ligand>
        <name>(2R)-2-phosphoglycerate</name>
        <dbReference type="ChEBI" id="CHEBI:58289"/>
    </ligand>
</feature>
<feature type="binding site" evidence="1">
    <location>
        <position position="388"/>
    </location>
    <ligand>
        <name>(2R)-2-phosphoglycerate</name>
        <dbReference type="ChEBI" id="CHEBI:58289"/>
    </ligand>
</feature>
<proteinExistence type="inferred from homology"/>
<evidence type="ECO:0000255" key="1">
    <source>
        <dbReference type="HAMAP-Rule" id="MF_00318"/>
    </source>
</evidence>
<organism>
    <name type="scientific">Burkholderia ambifaria (strain MC40-6)</name>
    <dbReference type="NCBI Taxonomy" id="398577"/>
    <lineage>
        <taxon>Bacteria</taxon>
        <taxon>Pseudomonadati</taxon>
        <taxon>Pseudomonadota</taxon>
        <taxon>Betaproteobacteria</taxon>
        <taxon>Burkholderiales</taxon>
        <taxon>Burkholderiaceae</taxon>
        <taxon>Burkholderia</taxon>
        <taxon>Burkholderia cepacia complex</taxon>
    </lineage>
</organism>
<keyword id="KW-0963">Cytoplasm</keyword>
<keyword id="KW-0324">Glycolysis</keyword>
<keyword id="KW-0456">Lyase</keyword>
<keyword id="KW-0460">Magnesium</keyword>
<keyword id="KW-0479">Metal-binding</keyword>
<keyword id="KW-0964">Secreted</keyword>
<accession>B1YT09</accession>
<comment type="function">
    <text evidence="1">Catalyzes the reversible conversion of 2-phosphoglycerate (2-PG) into phosphoenolpyruvate (PEP). It is essential for the degradation of carbohydrates via glycolysis.</text>
</comment>
<comment type="catalytic activity">
    <reaction evidence="1">
        <text>(2R)-2-phosphoglycerate = phosphoenolpyruvate + H2O</text>
        <dbReference type="Rhea" id="RHEA:10164"/>
        <dbReference type="ChEBI" id="CHEBI:15377"/>
        <dbReference type="ChEBI" id="CHEBI:58289"/>
        <dbReference type="ChEBI" id="CHEBI:58702"/>
        <dbReference type="EC" id="4.2.1.11"/>
    </reaction>
</comment>
<comment type="cofactor">
    <cofactor evidence="1">
        <name>Mg(2+)</name>
        <dbReference type="ChEBI" id="CHEBI:18420"/>
    </cofactor>
    <text evidence="1">Binds a second Mg(2+) ion via substrate during catalysis.</text>
</comment>
<comment type="pathway">
    <text evidence="1">Carbohydrate degradation; glycolysis; pyruvate from D-glyceraldehyde 3-phosphate: step 4/5.</text>
</comment>
<comment type="subcellular location">
    <subcellularLocation>
        <location evidence="1">Cytoplasm</location>
    </subcellularLocation>
    <subcellularLocation>
        <location evidence="1">Secreted</location>
    </subcellularLocation>
    <subcellularLocation>
        <location evidence="1">Cell surface</location>
    </subcellularLocation>
    <text evidence="1">Fractions of enolase are present in both the cytoplasm and on the cell surface.</text>
</comment>
<comment type="similarity">
    <text evidence="1">Belongs to the enolase family.</text>
</comment>
<name>ENO_BURA4</name>
<gene>
    <name evidence="1" type="primary">eno</name>
    <name type="ordered locus">BamMC406_2017</name>
</gene>